<organism>
    <name type="scientific">Rickettsia conorii (strain ATCC VR-613 / Malish 7)</name>
    <dbReference type="NCBI Taxonomy" id="272944"/>
    <lineage>
        <taxon>Bacteria</taxon>
        <taxon>Pseudomonadati</taxon>
        <taxon>Pseudomonadota</taxon>
        <taxon>Alphaproteobacteria</taxon>
        <taxon>Rickettsiales</taxon>
        <taxon>Rickettsiaceae</taxon>
        <taxon>Rickettsieae</taxon>
        <taxon>Rickettsia</taxon>
        <taxon>spotted fever group</taxon>
    </lineage>
</organism>
<name>RPOB_RICCN</name>
<accession>Q9RH41</accession>
<accession>Q9RH39</accession>
<keyword id="KW-0240">DNA-directed RNA polymerase</keyword>
<keyword id="KW-0548">Nucleotidyltransferase</keyword>
<keyword id="KW-0804">Transcription</keyword>
<keyword id="KW-0808">Transferase</keyword>
<feature type="chain" id="PRO_0000047948" description="DNA-directed RNA polymerase subunit beta">
    <location>
        <begin position="1"/>
        <end position="1373"/>
    </location>
</feature>
<feature type="sequence variant" description="In strain: Moroccan.">
    <original>L</original>
    <variation>P</variation>
    <location>
        <position position="109"/>
    </location>
</feature>
<feature type="sequence variant" description="In strain: Moroccan.">
    <original>K</original>
    <variation>E</variation>
    <location>
        <position position="931"/>
    </location>
</feature>
<dbReference type="EC" id="2.7.7.6" evidence="1"/>
<dbReference type="EMBL" id="AF076434">
    <property type="protein sequence ID" value="AAF22433.1"/>
    <property type="molecule type" value="Genomic_DNA"/>
</dbReference>
<dbReference type="EMBL" id="AF076435">
    <property type="protein sequence ID" value="AAF22435.1"/>
    <property type="molecule type" value="Genomic_DNA"/>
</dbReference>
<dbReference type="EMBL" id="AE006914">
    <property type="protein sequence ID" value="AAL02719.1"/>
    <property type="molecule type" value="Genomic_DNA"/>
</dbReference>
<dbReference type="PIR" id="E97722">
    <property type="entry name" value="E97722"/>
</dbReference>
<dbReference type="RefSeq" id="WP_010976851.1">
    <property type="nucleotide sequence ID" value="NC_003103.1"/>
</dbReference>
<dbReference type="SMR" id="Q9RH41"/>
<dbReference type="GeneID" id="928009"/>
<dbReference type="KEGG" id="rco:RC0181"/>
<dbReference type="PATRIC" id="fig|272944.4.peg.210"/>
<dbReference type="HOGENOM" id="CLU_000524_4_0_5"/>
<dbReference type="Proteomes" id="UP000000816">
    <property type="component" value="Chromosome"/>
</dbReference>
<dbReference type="GO" id="GO:0000428">
    <property type="term" value="C:DNA-directed RNA polymerase complex"/>
    <property type="evidence" value="ECO:0007669"/>
    <property type="project" value="UniProtKB-KW"/>
</dbReference>
<dbReference type="GO" id="GO:0003677">
    <property type="term" value="F:DNA binding"/>
    <property type="evidence" value="ECO:0007669"/>
    <property type="project" value="UniProtKB-UniRule"/>
</dbReference>
<dbReference type="GO" id="GO:0003899">
    <property type="term" value="F:DNA-directed RNA polymerase activity"/>
    <property type="evidence" value="ECO:0007669"/>
    <property type="project" value="UniProtKB-UniRule"/>
</dbReference>
<dbReference type="GO" id="GO:0032549">
    <property type="term" value="F:ribonucleoside binding"/>
    <property type="evidence" value="ECO:0007669"/>
    <property type="project" value="InterPro"/>
</dbReference>
<dbReference type="GO" id="GO:0006351">
    <property type="term" value="P:DNA-templated transcription"/>
    <property type="evidence" value="ECO:0007669"/>
    <property type="project" value="UniProtKB-UniRule"/>
</dbReference>
<dbReference type="CDD" id="cd00653">
    <property type="entry name" value="RNA_pol_B_RPB2"/>
    <property type="match status" value="1"/>
</dbReference>
<dbReference type="Gene3D" id="2.40.50.100">
    <property type="match status" value="1"/>
</dbReference>
<dbReference type="Gene3D" id="2.40.50.150">
    <property type="match status" value="1"/>
</dbReference>
<dbReference type="Gene3D" id="3.90.1100.10">
    <property type="match status" value="2"/>
</dbReference>
<dbReference type="Gene3D" id="2.30.150.10">
    <property type="entry name" value="DNA-directed RNA polymerase, beta subunit, external 1 domain"/>
    <property type="match status" value="1"/>
</dbReference>
<dbReference type="Gene3D" id="2.40.270.10">
    <property type="entry name" value="DNA-directed RNA polymerase, subunit 2, domain 6"/>
    <property type="match status" value="2"/>
</dbReference>
<dbReference type="Gene3D" id="3.90.1800.10">
    <property type="entry name" value="RNA polymerase alpha subunit dimerisation domain"/>
    <property type="match status" value="1"/>
</dbReference>
<dbReference type="Gene3D" id="3.90.1110.10">
    <property type="entry name" value="RNA polymerase Rpb2, domain 2"/>
    <property type="match status" value="2"/>
</dbReference>
<dbReference type="HAMAP" id="MF_01321">
    <property type="entry name" value="RNApol_bact_RpoB"/>
    <property type="match status" value="1"/>
</dbReference>
<dbReference type="InterPro" id="IPR042107">
    <property type="entry name" value="DNA-dir_RNA_pol_bsu_ext_1_sf"/>
</dbReference>
<dbReference type="InterPro" id="IPR019462">
    <property type="entry name" value="DNA-dir_RNA_pol_bsu_external_1"/>
</dbReference>
<dbReference type="InterPro" id="IPR015712">
    <property type="entry name" value="DNA-dir_RNA_pol_su2"/>
</dbReference>
<dbReference type="InterPro" id="IPR007120">
    <property type="entry name" value="DNA-dir_RNAP_su2_dom"/>
</dbReference>
<dbReference type="InterPro" id="IPR037033">
    <property type="entry name" value="DNA-dir_RNAP_su2_hyb_sf"/>
</dbReference>
<dbReference type="InterPro" id="IPR010243">
    <property type="entry name" value="RNA_pol_bsu_bac"/>
</dbReference>
<dbReference type="InterPro" id="IPR007121">
    <property type="entry name" value="RNA_pol_bsu_CS"/>
</dbReference>
<dbReference type="InterPro" id="IPR007644">
    <property type="entry name" value="RNA_pol_bsu_protrusion"/>
</dbReference>
<dbReference type="InterPro" id="IPR007642">
    <property type="entry name" value="RNA_pol_Rpb2_2"/>
</dbReference>
<dbReference type="InterPro" id="IPR037034">
    <property type="entry name" value="RNA_pol_Rpb2_2_sf"/>
</dbReference>
<dbReference type="InterPro" id="IPR007645">
    <property type="entry name" value="RNA_pol_Rpb2_3"/>
</dbReference>
<dbReference type="InterPro" id="IPR007641">
    <property type="entry name" value="RNA_pol_Rpb2_7"/>
</dbReference>
<dbReference type="InterPro" id="IPR014724">
    <property type="entry name" value="RNA_pol_RPB2_OB-fold"/>
</dbReference>
<dbReference type="NCBIfam" id="NF001616">
    <property type="entry name" value="PRK00405.1"/>
    <property type="match status" value="1"/>
</dbReference>
<dbReference type="NCBIfam" id="TIGR02013">
    <property type="entry name" value="rpoB"/>
    <property type="match status" value="1"/>
</dbReference>
<dbReference type="PANTHER" id="PTHR20856">
    <property type="entry name" value="DNA-DIRECTED RNA POLYMERASE I SUBUNIT 2"/>
    <property type="match status" value="1"/>
</dbReference>
<dbReference type="Pfam" id="PF04563">
    <property type="entry name" value="RNA_pol_Rpb2_1"/>
    <property type="match status" value="1"/>
</dbReference>
<dbReference type="Pfam" id="PF04561">
    <property type="entry name" value="RNA_pol_Rpb2_2"/>
    <property type="match status" value="1"/>
</dbReference>
<dbReference type="Pfam" id="PF04565">
    <property type="entry name" value="RNA_pol_Rpb2_3"/>
    <property type="match status" value="1"/>
</dbReference>
<dbReference type="Pfam" id="PF10385">
    <property type="entry name" value="RNA_pol_Rpb2_45"/>
    <property type="match status" value="1"/>
</dbReference>
<dbReference type="Pfam" id="PF00562">
    <property type="entry name" value="RNA_pol_Rpb2_6"/>
    <property type="match status" value="1"/>
</dbReference>
<dbReference type="Pfam" id="PF04560">
    <property type="entry name" value="RNA_pol_Rpb2_7"/>
    <property type="match status" value="1"/>
</dbReference>
<dbReference type="SUPFAM" id="SSF64484">
    <property type="entry name" value="beta and beta-prime subunits of DNA dependent RNA-polymerase"/>
    <property type="match status" value="1"/>
</dbReference>
<dbReference type="PROSITE" id="PS01166">
    <property type="entry name" value="RNA_POL_BETA"/>
    <property type="match status" value="1"/>
</dbReference>
<proteinExistence type="inferred from homology"/>
<sequence>MVSLRDNIEAQPLSHNRRIRKNFGHINLVADIPNLIEIQKNSYEKNFLQLNIKDSERKNKGLQSILNSIFPISDSSNIANLEFVKYEFDTPKYDVEECSQRSLSYAAPLKVTLRLSIWDIDEDTGTREIKGIKEQEVYMGDIPLMTKNGTFIINGTERVVVSQMHRSPGVFFYHDEGKVHSSGKLLYSARVIPYRGSWLDLEFDAKDVIYFRIDRKRKLYTTTLLRAIGMSTEEIIKFYYNSVTYKLVKNKGWAVKFIPQHITAHRLTSDLVDADTGNILLKAGQKITPRLAKKYSGEGLNNILVAHETLIGKYLSEDLRDPASDEVLAKIGEMITADMLNVINDLKIKNVNVLVINPQSGPYIRNTLFADKNQDREAALCDIFRVLRPGEPANIEAAESLFYNLFFDTERYDLSEVGRIKMNSRLELNISEEVTVLTIDDIKNIVRVLVELKDGKGIIDDIDHLGNRRVRSVGELIENQFRIGLVRMEKSVIERMSAGDVDTVMPHDLVNSKILVSVVKEFFSTSQLSQFMDQTNPLSEITHKRRLSALGPGGLSRDRAGFEVRDVHPTHYGRICPIETPEGQNIGLINSMATYARINKHGFIESPYRRVKDGCVTDEVVYLSAIEEGKYKIGQANSKINKDGKLQGEFINCRVEGGNFVMVEPYEVDFIDVTPMQVVSVAASLIPFLENDDANRALMGSNMQRQAVPLIKTDAPFVGTGVEGVVAKDSGASVLALHDGIVEQVDSNRIVIRTLEQKVDGSPSVDIYNLLKFQKSNHNTCINQKPLVKVGHYVKKNDIIADGPSTDNGEIALGRNVLVAFLPWNGYNFEDSILISERIVKEDVFTSIHIEEFEVIARDTRLGPEEITRDIPNVSEEALRHLDEVGIIYIGAEVKAGDILVGKVTPKSESPITPEEKLLRAIFGEKAFDVKDSSLHVPSGVSGTVVEVRVFSRRGVEKDQRAIAIEKQQIEKFAKDRDDELEIIEHFVFSWLEKLLVGQVIINGPKQVKVGQTITTEMLKGLSKGQFWQIIVEDANVMNEIEQIKTHYDEKKEALDKRFATKVEKLQSGDDLPQGALKVVKVFIATKHKLQPGDKMAGRHGNKGVISRIVPEEDMPFLEDGTVVDIVLNPLGLPSRMNIGQILETHLGWASINLAKKISTLVKEYKNKHIGIEQIKKFLIELYGENINSILERPEEEIISFCKKVSKGVHFATPVFDGAKVQDVKDMLKLAGQDPSGQVKLIDGRTGEYFDRLVTVGQKYLLKLHHLVDNKIHSRSIGPYSLVTQQPLGGKSHFGGQRFGEMECWALQAYGAAYTLQEMLTVKSDDVNGRIKTYDSIVRGENNFESGIPESFNVMIKEFRSLCLNVKLEVTSS</sequence>
<evidence type="ECO:0000255" key="1">
    <source>
        <dbReference type="HAMAP-Rule" id="MF_01321"/>
    </source>
</evidence>
<gene>
    <name evidence="1" type="primary">rpoB</name>
    <name type="ordered locus">RC0181</name>
</gene>
<reference key="1">
    <citation type="journal article" date="1999" name="Antimicrob. Agents Chemother.">
        <title>Characterization of mutations in the rpoB gene in naturally rifampin-resistant Rickettsia species.</title>
        <authorList>
            <person name="Drancourt M."/>
            <person name="Raoult D."/>
        </authorList>
    </citation>
    <scope>NUCLEOTIDE SEQUENCE [GENOMIC DNA]</scope>
    <source>
        <strain>ATCC VR-613 / Malish 7</strain>
        <strain>Moroccan</strain>
    </source>
</reference>
<reference key="2">
    <citation type="journal article" date="2001" name="Science">
        <title>Mechanisms of evolution in Rickettsia conorii and R. prowazekii.</title>
        <authorList>
            <person name="Ogata H."/>
            <person name="Audic S."/>
            <person name="Renesto-Audiffren P."/>
            <person name="Fournier P.-E."/>
            <person name="Barbe V."/>
            <person name="Samson D."/>
            <person name="Roux V."/>
            <person name="Cossart P."/>
            <person name="Weissenbach J."/>
            <person name="Claverie J.-M."/>
            <person name="Raoult D."/>
        </authorList>
    </citation>
    <scope>NUCLEOTIDE SEQUENCE [LARGE SCALE GENOMIC DNA]</scope>
    <source>
        <strain>ATCC VR-613 / Malish 7</strain>
    </source>
</reference>
<protein>
    <recommendedName>
        <fullName evidence="1">DNA-directed RNA polymerase subunit beta</fullName>
        <shortName evidence="1">RNAP subunit beta</shortName>
        <ecNumber evidence="1">2.7.7.6</ecNumber>
    </recommendedName>
    <alternativeName>
        <fullName evidence="1">RNA polymerase subunit beta</fullName>
    </alternativeName>
    <alternativeName>
        <fullName evidence="1">Transcriptase subunit beta</fullName>
    </alternativeName>
</protein>
<comment type="function">
    <text evidence="1">DNA-dependent RNA polymerase catalyzes the transcription of DNA into RNA using the four ribonucleoside triphosphates as substrates.</text>
</comment>
<comment type="catalytic activity">
    <reaction evidence="1">
        <text>RNA(n) + a ribonucleoside 5'-triphosphate = RNA(n+1) + diphosphate</text>
        <dbReference type="Rhea" id="RHEA:21248"/>
        <dbReference type="Rhea" id="RHEA-COMP:14527"/>
        <dbReference type="Rhea" id="RHEA-COMP:17342"/>
        <dbReference type="ChEBI" id="CHEBI:33019"/>
        <dbReference type="ChEBI" id="CHEBI:61557"/>
        <dbReference type="ChEBI" id="CHEBI:140395"/>
        <dbReference type="EC" id="2.7.7.6"/>
    </reaction>
</comment>
<comment type="subunit">
    <text evidence="1">The RNAP catalytic core consists of 2 alpha, 1 beta, 1 beta' and 1 omega subunit. When a sigma factor is associated with the core the holoenzyme is formed, which can initiate transcription.</text>
</comment>
<comment type="similarity">
    <text evidence="1">Belongs to the RNA polymerase beta chain family.</text>
</comment>